<name>UBA3_DANRE</name>
<dbReference type="EC" id="6.2.1.64"/>
<dbReference type="EMBL" id="BC045372">
    <property type="protein sequence ID" value="AAH45372.1"/>
    <property type="molecule type" value="mRNA"/>
</dbReference>
<dbReference type="RefSeq" id="NP_998632.1">
    <property type="nucleotide sequence ID" value="NM_213467.1"/>
</dbReference>
<dbReference type="SMR" id="Q7ZVX6"/>
<dbReference type="FunCoup" id="Q7ZVX6">
    <property type="interactions" value="2820"/>
</dbReference>
<dbReference type="STRING" id="7955.ENSDARP00000075198"/>
<dbReference type="PaxDb" id="7955-ENSDARP00000075198"/>
<dbReference type="Ensembl" id="ENSDART00000080752">
    <property type="protein sequence ID" value="ENSDARP00000075198"/>
    <property type="gene ID" value="ENSDARG00000057987"/>
</dbReference>
<dbReference type="GeneID" id="406776"/>
<dbReference type="KEGG" id="dre:406776"/>
<dbReference type="AGR" id="ZFIN:ZDB-GENE-040426-2825"/>
<dbReference type="CTD" id="9039"/>
<dbReference type="ZFIN" id="ZDB-GENE-040426-2825">
    <property type="gene designation" value="uba3"/>
</dbReference>
<dbReference type="eggNOG" id="KOG2015">
    <property type="taxonomic scope" value="Eukaryota"/>
</dbReference>
<dbReference type="HOGENOM" id="CLU_013325_13_1_1"/>
<dbReference type="InParanoid" id="Q7ZVX6"/>
<dbReference type="OMA" id="HIIEYVI"/>
<dbReference type="OrthoDB" id="5977743at2759"/>
<dbReference type="PhylomeDB" id="Q7ZVX6"/>
<dbReference type="TreeFam" id="TF300499"/>
<dbReference type="Reactome" id="R-DRE-8951664">
    <property type="pathway name" value="Neddylation"/>
</dbReference>
<dbReference type="Reactome" id="R-DRE-983168">
    <property type="pathway name" value="Antigen processing: Ubiquitination &amp; Proteasome degradation"/>
</dbReference>
<dbReference type="UniPathway" id="UPA00885"/>
<dbReference type="PRO" id="PR:Q7ZVX6"/>
<dbReference type="Proteomes" id="UP000000437">
    <property type="component" value="Alternate scaffold 11"/>
</dbReference>
<dbReference type="Proteomes" id="UP000000437">
    <property type="component" value="Chromosome 11"/>
</dbReference>
<dbReference type="Bgee" id="ENSDARG00000057987">
    <property type="expression patterns" value="Expressed in cleaving embryo and 29 other cell types or tissues"/>
</dbReference>
<dbReference type="ExpressionAtlas" id="Q7ZVX6">
    <property type="expression patterns" value="baseline"/>
</dbReference>
<dbReference type="GO" id="GO:0005737">
    <property type="term" value="C:cytoplasm"/>
    <property type="evidence" value="ECO:0000318"/>
    <property type="project" value="GO_Central"/>
</dbReference>
<dbReference type="GO" id="GO:0005634">
    <property type="term" value="C:nucleus"/>
    <property type="evidence" value="ECO:0000318"/>
    <property type="project" value="GO_Central"/>
</dbReference>
<dbReference type="GO" id="GO:0005524">
    <property type="term" value="F:ATP binding"/>
    <property type="evidence" value="ECO:0007669"/>
    <property type="project" value="UniProtKB-KW"/>
</dbReference>
<dbReference type="GO" id="GO:0019781">
    <property type="term" value="F:NEDD8 activating enzyme activity"/>
    <property type="evidence" value="ECO:0000318"/>
    <property type="project" value="GO_Central"/>
</dbReference>
<dbReference type="GO" id="GO:0045116">
    <property type="term" value="P:protein neddylation"/>
    <property type="evidence" value="ECO:0000318"/>
    <property type="project" value="GO_Central"/>
</dbReference>
<dbReference type="CDD" id="cd01488">
    <property type="entry name" value="Uba3_RUB"/>
    <property type="match status" value="1"/>
</dbReference>
<dbReference type="FunFam" id="1.10.10.520:FF:000001">
    <property type="entry name" value="NEDD8-activating enzyme E1 catalytic subunit"/>
    <property type="match status" value="1"/>
</dbReference>
<dbReference type="FunFam" id="3.40.50.720:FF:000106">
    <property type="entry name" value="NEDD8-activating enzyme E1 catalytic subunit, putative"/>
    <property type="match status" value="1"/>
</dbReference>
<dbReference type="FunFam" id="3.10.290.20:FF:000001">
    <property type="entry name" value="NEDD8-activating enzyme E1 catalytic subunit, variant"/>
    <property type="match status" value="1"/>
</dbReference>
<dbReference type="Gene3D" id="3.40.50.720">
    <property type="entry name" value="NAD(P)-binding Rossmann-like Domain"/>
    <property type="match status" value="1"/>
</dbReference>
<dbReference type="Gene3D" id="1.10.10.520">
    <property type="entry name" value="Ubiquitin activating enzymes (Uba3). Chain: B, domain 2"/>
    <property type="match status" value="1"/>
</dbReference>
<dbReference type="Gene3D" id="3.10.290.20">
    <property type="entry name" value="Ubiquitin-like 2 activating enzyme e1b. Chain: B, domain 3"/>
    <property type="match status" value="1"/>
</dbReference>
<dbReference type="InterPro" id="IPR014929">
    <property type="entry name" value="E2-binding"/>
</dbReference>
<dbReference type="InterPro" id="IPR045886">
    <property type="entry name" value="ThiF/MoeB/HesA"/>
</dbReference>
<dbReference type="InterPro" id="IPR000594">
    <property type="entry name" value="ThiF_NAD_FAD-bd"/>
</dbReference>
<dbReference type="InterPro" id="IPR023318">
    <property type="entry name" value="Ub_act_enz_dom_a_sf"/>
</dbReference>
<dbReference type="InterPro" id="IPR030468">
    <property type="entry name" value="Uba3_N"/>
</dbReference>
<dbReference type="InterPro" id="IPR035985">
    <property type="entry name" value="Ubiquitin-activating_enz"/>
</dbReference>
<dbReference type="InterPro" id="IPR033127">
    <property type="entry name" value="UBQ-activ_enz_E1_Cys_AS"/>
</dbReference>
<dbReference type="PANTHER" id="PTHR10953:SF233">
    <property type="entry name" value="NEDD8-ACTIVATING ENZYME E1 CATALYTIC SUBUNIT"/>
    <property type="match status" value="1"/>
</dbReference>
<dbReference type="PANTHER" id="PTHR10953">
    <property type="entry name" value="UBIQUITIN-ACTIVATING ENZYME E1"/>
    <property type="match status" value="1"/>
</dbReference>
<dbReference type="Pfam" id="PF08825">
    <property type="entry name" value="E2_bind"/>
    <property type="match status" value="1"/>
</dbReference>
<dbReference type="Pfam" id="PF00899">
    <property type="entry name" value="ThiF"/>
    <property type="match status" value="1"/>
</dbReference>
<dbReference type="SMART" id="SM01181">
    <property type="entry name" value="E2_bind"/>
    <property type="match status" value="1"/>
</dbReference>
<dbReference type="SUPFAM" id="SSF69572">
    <property type="entry name" value="Activating enzymes of the ubiquitin-like proteins"/>
    <property type="match status" value="1"/>
</dbReference>
<dbReference type="PROSITE" id="PS00865">
    <property type="entry name" value="UBIQUITIN_ACTIVAT_2"/>
    <property type="match status" value="1"/>
</dbReference>
<feature type="chain" id="PRO_0000194945" description="NEDD8-activating enzyme E1 catalytic subunit">
    <location>
        <begin position="1"/>
        <end position="462"/>
    </location>
</feature>
<feature type="region of interest" description="Interaction with ube2m N-terminus" evidence="1">
    <location>
        <begin position="52"/>
        <end position="69"/>
    </location>
</feature>
<feature type="region of interest" description="Interaction with ube2m N-terminus" evidence="1">
    <location>
        <begin position="156"/>
        <end position="160"/>
    </location>
</feature>
<feature type="region of interest" description="Interaction with ube2m N-terminus" evidence="1">
    <location>
        <begin position="191"/>
        <end position="216"/>
    </location>
</feature>
<feature type="region of interest" description="Interaction with nedd8" evidence="1">
    <location>
        <begin position="226"/>
        <end position="228"/>
    </location>
</feature>
<feature type="region of interest" description="Interaction with nae1" evidence="1">
    <location>
        <begin position="241"/>
        <end position="247"/>
    </location>
</feature>
<feature type="region of interest" description="Interaction with nae1" evidence="1">
    <location>
        <begin position="291"/>
        <end position="294"/>
    </location>
</feature>
<feature type="region of interest" description="Interaction with ube2m N-terminus" evidence="1">
    <location>
        <begin position="330"/>
        <end position="337"/>
    </location>
</feature>
<feature type="region of interest" description="Interaction with nedd8" evidence="1">
    <location>
        <begin position="351"/>
        <end position="356"/>
    </location>
</feature>
<feature type="region of interest" description="Interaction with ube2m core domain" evidence="1">
    <location>
        <begin position="367"/>
        <end position="462"/>
    </location>
</feature>
<feature type="active site" description="Glycyl thioester intermediate" evidence="2">
    <location>
        <position position="236"/>
    </location>
</feature>
<feature type="binding site" evidence="1">
    <location>
        <begin position="99"/>
        <end position="123"/>
    </location>
    <ligand>
        <name>ATP</name>
        <dbReference type="ChEBI" id="CHEBI:30616"/>
    </ligand>
</feature>
<feature type="binding site" evidence="1">
    <location>
        <begin position="147"/>
        <end position="170"/>
    </location>
    <ligand>
        <name>ATP</name>
        <dbReference type="ChEBI" id="CHEBI:30616"/>
    </ligand>
</feature>
<feature type="site" description="Determines specificity for nedd8" evidence="1">
    <location>
        <position position="210"/>
    </location>
</feature>
<accession>Q7ZVX6</accession>
<organism>
    <name type="scientific">Danio rerio</name>
    <name type="common">Zebrafish</name>
    <name type="synonym">Brachydanio rerio</name>
    <dbReference type="NCBI Taxonomy" id="7955"/>
    <lineage>
        <taxon>Eukaryota</taxon>
        <taxon>Metazoa</taxon>
        <taxon>Chordata</taxon>
        <taxon>Craniata</taxon>
        <taxon>Vertebrata</taxon>
        <taxon>Euteleostomi</taxon>
        <taxon>Actinopterygii</taxon>
        <taxon>Neopterygii</taxon>
        <taxon>Teleostei</taxon>
        <taxon>Ostariophysi</taxon>
        <taxon>Cypriniformes</taxon>
        <taxon>Danionidae</taxon>
        <taxon>Danioninae</taxon>
        <taxon>Danio</taxon>
    </lineage>
</organism>
<keyword id="KW-0067">ATP-binding</keyword>
<keyword id="KW-0436">Ligase</keyword>
<keyword id="KW-0547">Nucleotide-binding</keyword>
<keyword id="KW-1185">Reference proteome</keyword>
<keyword id="KW-0833">Ubl conjugation pathway</keyword>
<evidence type="ECO:0000250" key="1"/>
<evidence type="ECO:0000255" key="2">
    <source>
        <dbReference type="PROSITE-ProRule" id="PRU10132"/>
    </source>
</evidence>
<evidence type="ECO:0000305" key="3"/>
<protein>
    <recommendedName>
        <fullName>NEDD8-activating enzyme E1 catalytic subunit</fullName>
        <ecNumber>6.2.1.64</ecNumber>
    </recommendedName>
    <alternativeName>
        <fullName>NEDD8-activating enzyme E1C</fullName>
    </alternativeName>
    <alternativeName>
        <fullName>Ubiquitin-activating enzyme E1C</fullName>
    </alternativeName>
    <alternativeName>
        <fullName>Ubiquitin-like modifier-activating enzyme 3</fullName>
        <shortName>Ubiquitin-activating enzyme 3</shortName>
    </alternativeName>
</protein>
<reference key="1">
    <citation type="submission" date="2003-01" db="EMBL/GenBank/DDBJ databases">
        <authorList>
            <consortium name="NIH - Zebrafish Gene Collection (ZGC) project"/>
        </authorList>
    </citation>
    <scope>NUCLEOTIDE SEQUENCE [LARGE SCALE MRNA]</scope>
    <source>
        <strain>AB</strain>
    </source>
</reference>
<comment type="function">
    <text evidence="1">Catalytic subunit of the dimeric uba3-nae1 E1 enzyme. E1 activates nedd8 by first adenylating its C-terminal glycine residue with ATP, thereafter linking this residue to the side chain of the catalytic cysteine, yielding a nedd8-uba3 thioester and free AMP. E1 finally transfers nedd8 to the catalytic cysteine of ube2m (By similarity).</text>
</comment>
<comment type="catalytic activity">
    <reaction>
        <text>ATP + [NEDD8 protein] + [E1 NEDD8-activating enzyme]-L-cysteine = AMP + diphosphate + [E1 NEDD8-activating enzyme]-S-[NEDD8 protein]-yl-L-cysteine.</text>
        <dbReference type="EC" id="6.2.1.64"/>
    </reaction>
</comment>
<comment type="pathway">
    <text>Protein modification; protein neddylation.</text>
</comment>
<comment type="subunit">
    <text evidence="1">Heterodimer of uba3 and nae1. Interacts with nedd8, ube2f and ube2m (By similarity).</text>
</comment>
<comment type="miscellaneous">
    <text evidence="1">Arg-210 acts as a selectivity gate, preventing misactivation of ubiquitin by this NEDD8-specific E1 complex.</text>
</comment>
<comment type="similarity">
    <text evidence="3">Belongs to the ubiquitin-activating E1 family. UBA3 subfamily.</text>
</comment>
<proteinExistence type="evidence at transcript level"/>
<sequence>MAEGEEPEKKRRRIEELNEKMVVDGGSGDRSEWQGRWDHVRKFLERTGPFTHPDFEASTESLQFLLDTCKILVIGAGGLGCELLKDLALSGFRHIHVVDMDTIDVSNLNRQFLFRPKDVGRPKAEVAADFVNDRVPGCSVVPHFKKIQDLDETFYRQFHIVVCGLDSVIARRWMNGMLLSLLIYEDGVLDPSSIIPLIDGGTEGFKGNARVILPGMTACIDCTLELYPPQINFPMCTIASMPRLPEHCVEYVRMLLWPKEKPFGDGVVLDGDDPKHIQWVYQKSLERAAEFNITGVTYRLTQGVVKRIIPAVASTNAVIAAACATEVFKIATSAYVPLNNYLVFNDVDGLYTYTFEAERKENCSACSQVPQDMQFTPSAKLQEVLDYLTENASLQMKSPAITTTLDGKNKTLYLQTVASIEERTRPNLSKTLKELGLVDGQELAVADVTTPQTVLFKLKFIS</sequence>
<gene>
    <name type="primary">uba3</name>
    <name type="synonym">ube1c</name>
    <name type="ORF">zgc:55528</name>
</gene>